<organism>
    <name type="scientific">Yarrowia lipolytica (strain CLIB 122 / E 150)</name>
    <name type="common">Yeast</name>
    <name type="synonym">Candida lipolytica</name>
    <dbReference type="NCBI Taxonomy" id="284591"/>
    <lineage>
        <taxon>Eukaryota</taxon>
        <taxon>Fungi</taxon>
        <taxon>Dikarya</taxon>
        <taxon>Ascomycota</taxon>
        <taxon>Saccharomycotina</taxon>
        <taxon>Dipodascomycetes</taxon>
        <taxon>Dipodascales</taxon>
        <taxon>Dipodascales incertae sedis</taxon>
        <taxon>Yarrowia</taxon>
    </lineage>
</organism>
<comment type="function">
    <text evidence="1">Probable lipid hydrolase.</text>
</comment>
<comment type="subcellular location">
    <subcellularLocation>
        <location evidence="5">Membrane</location>
        <topology evidence="5">Single-pass membrane protein</topology>
    </subcellularLocation>
</comment>
<comment type="similarity">
    <text evidence="5">Belongs to the PLPL family.</text>
</comment>
<protein>
    <recommendedName>
        <fullName>Patatin-like phospholipase domain-containing protein YALI0D16379g</fullName>
        <ecNumber>3.1.1.-</ecNumber>
    </recommendedName>
</protein>
<evidence type="ECO:0000250" key="1"/>
<evidence type="ECO:0000255" key="2"/>
<evidence type="ECO:0000255" key="3">
    <source>
        <dbReference type="PROSITE-ProRule" id="PRU01161"/>
    </source>
</evidence>
<evidence type="ECO:0000256" key="4">
    <source>
        <dbReference type="SAM" id="MobiDB-lite"/>
    </source>
</evidence>
<evidence type="ECO:0000305" key="5"/>
<gene>
    <name type="ordered locus">YALI0D16379g</name>
</gene>
<proteinExistence type="inferred from homology"/>
<reference key="1">
    <citation type="journal article" date="2004" name="Nature">
        <title>Genome evolution in yeasts.</title>
        <authorList>
            <person name="Dujon B."/>
            <person name="Sherman D."/>
            <person name="Fischer G."/>
            <person name="Durrens P."/>
            <person name="Casaregola S."/>
            <person name="Lafontaine I."/>
            <person name="de Montigny J."/>
            <person name="Marck C."/>
            <person name="Neuveglise C."/>
            <person name="Talla E."/>
            <person name="Goffard N."/>
            <person name="Frangeul L."/>
            <person name="Aigle M."/>
            <person name="Anthouard V."/>
            <person name="Babour A."/>
            <person name="Barbe V."/>
            <person name="Barnay S."/>
            <person name="Blanchin S."/>
            <person name="Beckerich J.-M."/>
            <person name="Beyne E."/>
            <person name="Bleykasten C."/>
            <person name="Boisrame A."/>
            <person name="Boyer J."/>
            <person name="Cattolico L."/>
            <person name="Confanioleri F."/>
            <person name="de Daruvar A."/>
            <person name="Despons L."/>
            <person name="Fabre E."/>
            <person name="Fairhead C."/>
            <person name="Ferry-Dumazet H."/>
            <person name="Groppi A."/>
            <person name="Hantraye F."/>
            <person name="Hennequin C."/>
            <person name="Jauniaux N."/>
            <person name="Joyet P."/>
            <person name="Kachouri R."/>
            <person name="Kerrest A."/>
            <person name="Koszul R."/>
            <person name="Lemaire M."/>
            <person name="Lesur I."/>
            <person name="Ma L."/>
            <person name="Muller H."/>
            <person name="Nicaud J.-M."/>
            <person name="Nikolski M."/>
            <person name="Oztas S."/>
            <person name="Ozier-Kalogeropoulos O."/>
            <person name="Pellenz S."/>
            <person name="Potier S."/>
            <person name="Richard G.-F."/>
            <person name="Straub M.-L."/>
            <person name="Suleau A."/>
            <person name="Swennen D."/>
            <person name="Tekaia F."/>
            <person name="Wesolowski-Louvel M."/>
            <person name="Westhof E."/>
            <person name="Wirth B."/>
            <person name="Zeniou-Meyer M."/>
            <person name="Zivanovic Y."/>
            <person name="Bolotin-Fukuhara M."/>
            <person name="Thierry A."/>
            <person name="Bouchier C."/>
            <person name="Caudron B."/>
            <person name="Scarpelli C."/>
            <person name="Gaillardin C."/>
            <person name="Weissenbach J."/>
            <person name="Wincker P."/>
            <person name="Souciet J.-L."/>
        </authorList>
    </citation>
    <scope>NUCLEOTIDE SEQUENCE [LARGE SCALE GENOMIC DNA]</scope>
    <source>
        <strain>CLIB 122 / E 150</strain>
    </source>
</reference>
<accession>Q6C8W4</accession>
<dbReference type="EC" id="3.1.1.-"/>
<dbReference type="EMBL" id="CR382130">
    <property type="protein sequence ID" value="CAG81089.1"/>
    <property type="molecule type" value="Genomic_DNA"/>
</dbReference>
<dbReference type="RefSeq" id="XP_502898.1">
    <property type="nucleotide sequence ID" value="XM_502898.1"/>
</dbReference>
<dbReference type="EnsemblFungi" id="CAG81089">
    <property type="protein sequence ID" value="CAG81089"/>
    <property type="gene ID" value="YALI0_D16379g"/>
</dbReference>
<dbReference type="KEGG" id="yli:2911293"/>
<dbReference type="VEuPathDB" id="FungiDB:YALI0_D16379g"/>
<dbReference type="HOGENOM" id="CLU_009031_2_2_1"/>
<dbReference type="InParanoid" id="Q6C8W4"/>
<dbReference type="OMA" id="PRTRFMD"/>
<dbReference type="OrthoDB" id="10005at4891"/>
<dbReference type="Proteomes" id="UP000001300">
    <property type="component" value="Chromosome D"/>
</dbReference>
<dbReference type="GO" id="GO:0016020">
    <property type="term" value="C:membrane"/>
    <property type="evidence" value="ECO:0007669"/>
    <property type="project" value="UniProtKB-SubCell"/>
</dbReference>
<dbReference type="GO" id="GO:0004806">
    <property type="term" value="F:triacylglycerol lipase activity"/>
    <property type="evidence" value="ECO:0007669"/>
    <property type="project" value="InterPro"/>
</dbReference>
<dbReference type="GO" id="GO:0016042">
    <property type="term" value="P:lipid catabolic process"/>
    <property type="evidence" value="ECO:0007669"/>
    <property type="project" value="UniProtKB-KW"/>
</dbReference>
<dbReference type="GO" id="GO:0006641">
    <property type="term" value="P:triglyceride metabolic process"/>
    <property type="evidence" value="ECO:0007669"/>
    <property type="project" value="UniProtKB-ARBA"/>
</dbReference>
<dbReference type="CDD" id="cd07232">
    <property type="entry name" value="Pat_PLPL"/>
    <property type="match status" value="1"/>
</dbReference>
<dbReference type="Gene3D" id="3.40.1090.10">
    <property type="entry name" value="Cytosolic phospholipase A2 catalytic domain"/>
    <property type="match status" value="2"/>
</dbReference>
<dbReference type="InterPro" id="IPR016035">
    <property type="entry name" value="Acyl_Trfase/lysoPLipase"/>
</dbReference>
<dbReference type="InterPro" id="IPR050301">
    <property type="entry name" value="NTE"/>
</dbReference>
<dbReference type="InterPro" id="IPR002641">
    <property type="entry name" value="PNPLA_dom"/>
</dbReference>
<dbReference type="InterPro" id="IPR021771">
    <property type="entry name" value="Triacylglycerol_lipase_N"/>
</dbReference>
<dbReference type="PANTHER" id="PTHR14226">
    <property type="entry name" value="NEUROPATHY TARGET ESTERASE/SWISS CHEESE D.MELANOGASTER"/>
    <property type="match status" value="1"/>
</dbReference>
<dbReference type="PANTHER" id="PTHR14226:SF66">
    <property type="entry name" value="TRIACYLGLYCEROL LIPASE PTL2"/>
    <property type="match status" value="1"/>
</dbReference>
<dbReference type="Pfam" id="PF11815">
    <property type="entry name" value="DUF3336"/>
    <property type="match status" value="1"/>
</dbReference>
<dbReference type="Pfam" id="PF01734">
    <property type="entry name" value="Patatin"/>
    <property type="match status" value="1"/>
</dbReference>
<dbReference type="SUPFAM" id="SSF52151">
    <property type="entry name" value="FabD/lysophospholipase-like"/>
    <property type="match status" value="1"/>
</dbReference>
<dbReference type="PROSITE" id="PS51635">
    <property type="entry name" value="PNPLA"/>
    <property type="match status" value="1"/>
</dbReference>
<name>PLPL_YARLI</name>
<keyword id="KW-0378">Hydrolase</keyword>
<keyword id="KW-0442">Lipid degradation</keyword>
<keyword id="KW-0443">Lipid metabolism</keyword>
<keyword id="KW-0472">Membrane</keyword>
<keyword id="KW-1185">Reference proteome</keyword>
<keyword id="KW-0812">Transmembrane</keyword>
<keyword id="KW-1133">Transmembrane helix</keyword>
<feature type="chain" id="PRO_0000295566" description="Patatin-like phospholipase domain-containing protein YALI0D16379g">
    <location>
        <begin position="1"/>
        <end position="818"/>
    </location>
</feature>
<feature type="transmembrane region" description="Helical" evidence="2">
    <location>
        <begin position="223"/>
        <end position="243"/>
    </location>
</feature>
<feature type="domain" description="PNPLA" evidence="3">
    <location>
        <begin position="398"/>
        <end position="589"/>
    </location>
</feature>
<feature type="region of interest" description="Disordered" evidence="4">
    <location>
        <begin position="1"/>
        <end position="50"/>
    </location>
</feature>
<feature type="region of interest" description="Disordered" evidence="4">
    <location>
        <begin position="154"/>
        <end position="178"/>
    </location>
</feature>
<feature type="region of interest" description="Disordered" evidence="4">
    <location>
        <begin position="781"/>
        <end position="805"/>
    </location>
</feature>
<feature type="short sequence motif" description="GXSXG" evidence="3">
    <location>
        <begin position="429"/>
        <end position="433"/>
    </location>
</feature>
<feature type="compositionally biased region" description="Polar residues" evidence="4">
    <location>
        <begin position="22"/>
        <end position="38"/>
    </location>
</feature>
<feature type="compositionally biased region" description="Basic and acidic residues" evidence="4">
    <location>
        <begin position="164"/>
        <end position="178"/>
    </location>
</feature>
<feature type="active site" description="Nucleophile" evidence="3">
    <location>
        <position position="431"/>
    </location>
</feature>
<feature type="active site" description="Proton acceptor" evidence="3">
    <location>
        <position position="576"/>
    </location>
</feature>
<sequence length="818" mass="93855">MLKLKFRWNKPDDGPRVKRQKSQQLTLDSPEGSETSSRPGGGYDNDRDVNGTFKRPWDITKIPGYNQTYVNEASLDKFAAYLKEEEVPVESSTPVSSEEMLPLEPVQKEYITSKHDWTPVFSVLKNNNSVNKRKMSHTALKSDFKHYLDMYDKEEKRRRGKSKKDKEGSEGDKTKTKEPKELVRKSVFSSILGVFSIFSKTKDGRKLKRDEIGEGIGFWLMRWPALFFIGMWLLFLTTIYASVRVLVAGYENILTWRGKRAKLRKVLRGARTYEQWVQAAQDLDVELGNAEWRENPKFGYYDHVTISKLTKMVRKLRLQDQAEDLSNILQGCIKNNFAGTESSTLYSQTYYGTKKVVEQWNEELGKAVTYVLESPKIDDEEKRDLFRLYSKNFGKSALCLSGGGCFAYLHFGIVKAMLDQDLLPQIISGTSGGALIAALACTRTDEELRQILVPELAYKITACWEPFPKWVFRWWRTGARFDSVDWARRSCWFTLGDMTFKEAYQRTGRILNVSTVPADPHSPVILCNYITSPDCLIWSALLASAAVPGILNPVMLMNKTKSGDIVPFSFGSKWKDGSLRTDIPVDALNTYFNVNCSIVSQVNPHIALFFYAPRGTVGRPVSHRKGKGWRGGFLGAALESMIKLEIRKWLKFIKAVELLPRFVDQDWTNVWLQRFSGSVTLWPKIHLADFWHILGDPWPEKMEDLLYRGQQCAFPKLLFLKHRMNIEKRIRNGRQATRHRKRKLEETDVCDLVRKTFSESDPDSDVKHSFVFPALMAPRSAGTDISSSNSDYDHEPQWEMDEGDSFLTADEEYPTTIL</sequence>